<name>ECM14_PARBP</name>
<protein>
    <recommendedName>
        <fullName evidence="7">Inactive metallocarboxypeptidase ECM14</fullName>
    </recommendedName>
</protein>
<dbReference type="EMBL" id="KN305537">
    <property type="protein sequence ID" value="EEH22479.1"/>
    <property type="molecule type" value="Genomic_DNA"/>
</dbReference>
<dbReference type="SMR" id="C0SAI5"/>
<dbReference type="GlyCosmos" id="C0SAI5">
    <property type="glycosylation" value="3 sites, No reported glycans"/>
</dbReference>
<dbReference type="VEuPathDB" id="FungiDB:PABG_04690"/>
<dbReference type="HOGENOM" id="CLU_019326_1_0_1"/>
<dbReference type="OrthoDB" id="3275at33183"/>
<dbReference type="GO" id="GO:0005576">
    <property type="term" value="C:extracellular region"/>
    <property type="evidence" value="ECO:0007669"/>
    <property type="project" value="UniProtKB-SubCell"/>
</dbReference>
<dbReference type="GO" id="GO:0005773">
    <property type="term" value="C:vacuole"/>
    <property type="evidence" value="ECO:0007669"/>
    <property type="project" value="UniProtKB-SubCell"/>
</dbReference>
<dbReference type="GO" id="GO:0008270">
    <property type="term" value="F:zinc ion binding"/>
    <property type="evidence" value="ECO:0007669"/>
    <property type="project" value="InterPro"/>
</dbReference>
<dbReference type="GO" id="GO:0071555">
    <property type="term" value="P:cell wall organization"/>
    <property type="evidence" value="ECO:0007669"/>
    <property type="project" value="UniProtKB-KW"/>
</dbReference>
<dbReference type="GO" id="GO:0006508">
    <property type="term" value="P:proteolysis"/>
    <property type="evidence" value="ECO:0007669"/>
    <property type="project" value="InterPro"/>
</dbReference>
<dbReference type="CDD" id="cd03860">
    <property type="entry name" value="M14_CP_A-B_like"/>
    <property type="match status" value="1"/>
</dbReference>
<dbReference type="FunFam" id="3.40.630.10:FF:000060">
    <property type="entry name" value="Putative metallocarboxypeptidase ecm14"/>
    <property type="match status" value="1"/>
</dbReference>
<dbReference type="Gene3D" id="3.40.630.10">
    <property type="entry name" value="Zn peptidases"/>
    <property type="match status" value="1"/>
</dbReference>
<dbReference type="InterPro" id="IPR000834">
    <property type="entry name" value="Peptidase_M14"/>
</dbReference>
<dbReference type="PANTHER" id="PTHR11705:SF147">
    <property type="entry name" value="INACTIVE METALLOCARBOXYPEPTIDASE ECM14"/>
    <property type="match status" value="1"/>
</dbReference>
<dbReference type="PANTHER" id="PTHR11705">
    <property type="entry name" value="PROTEASE FAMILY M14 CARBOXYPEPTIDASE A,B"/>
    <property type="match status" value="1"/>
</dbReference>
<dbReference type="Pfam" id="PF00246">
    <property type="entry name" value="Peptidase_M14"/>
    <property type="match status" value="1"/>
</dbReference>
<dbReference type="PRINTS" id="PR00765">
    <property type="entry name" value="CRBOXYPTASEA"/>
</dbReference>
<dbReference type="SMART" id="SM00631">
    <property type="entry name" value="Zn_pept"/>
    <property type="match status" value="1"/>
</dbReference>
<dbReference type="SUPFAM" id="SSF54897">
    <property type="entry name" value="Protease propeptides/inhibitors"/>
    <property type="match status" value="1"/>
</dbReference>
<dbReference type="SUPFAM" id="SSF53187">
    <property type="entry name" value="Zn-dependent exopeptidases"/>
    <property type="match status" value="1"/>
</dbReference>
<dbReference type="PROSITE" id="PS00132">
    <property type="entry name" value="CARBOXYPEPT_ZN_1"/>
    <property type="match status" value="1"/>
</dbReference>
<dbReference type="PROSITE" id="PS52035">
    <property type="entry name" value="PEPTIDASE_M14"/>
    <property type="match status" value="1"/>
</dbReference>
<organism>
    <name type="scientific">Paracoccidioides brasiliensis (strain Pb03)</name>
    <dbReference type="NCBI Taxonomy" id="482561"/>
    <lineage>
        <taxon>Eukaryota</taxon>
        <taxon>Fungi</taxon>
        <taxon>Dikarya</taxon>
        <taxon>Ascomycota</taxon>
        <taxon>Pezizomycotina</taxon>
        <taxon>Eurotiomycetes</taxon>
        <taxon>Eurotiomycetidae</taxon>
        <taxon>Onygenales</taxon>
        <taxon>Ajellomycetaceae</taxon>
        <taxon>Paracoccidioides</taxon>
    </lineage>
</organism>
<reference key="1">
    <citation type="journal article" date="2011" name="PLoS Genet.">
        <title>Comparative genomic analysis of human fungal pathogens causing paracoccidioidomycosis.</title>
        <authorList>
            <person name="Desjardins C.A."/>
            <person name="Champion M.D."/>
            <person name="Holder J.W."/>
            <person name="Muszewska A."/>
            <person name="Goldberg J."/>
            <person name="Bailao A.M."/>
            <person name="Brigido M.M."/>
            <person name="Ferreira M.E."/>
            <person name="Garcia A.M."/>
            <person name="Grynberg M."/>
            <person name="Gujja S."/>
            <person name="Heiman D.I."/>
            <person name="Henn M.R."/>
            <person name="Kodira C.D."/>
            <person name="Leon-Narvaez H."/>
            <person name="Longo L.V.G."/>
            <person name="Ma L.-J."/>
            <person name="Malavazi I."/>
            <person name="Matsuo A.L."/>
            <person name="Morais F.V."/>
            <person name="Pereira M."/>
            <person name="Rodriguez-Brito S."/>
            <person name="Sakthikumar S."/>
            <person name="Salem-Izacc S.M."/>
            <person name="Sykes S.M."/>
            <person name="Teixeira M.M."/>
            <person name="Vallejo M.C."/>
            <person name="Walter M.E."/>
            <person name="Yandava C."/>
            <person name="Young S."/>
            <person name="Zeng Q."/>
            <person name="Zucker J."/>
            <person name="Felipe M.S."/>
            <person name="Goldman G.H."/>
            <person name="Haas B.J."/>
            <person name="McEwen J.G."/>
            <person name="Nino-Vega G."/>
            <person name="Puccia R."/>
            <person name="San-Blas G."/>
            <person name="Soares C.M."/>
            <person name="Birren B.W."/>
            <person name="Cuomo C.A."/>
        </authorList>
    </citation>
    <scope>NUCLEOTIDE SEQUENCE [LARGE SCALE GENOMIC DNA]</scope>
    <source>
        <strain>Pb03</strain>
    </source>
</reference>
<keyword id="KW-0961">Cell wall biogenesis/degradation</keyword>
<keyword id="KW-1015">Disulfide bond</keyword>
<keyword id="KW-0325">Glycoprotein</keyword>
<keyword id="KW-0479">Metal-binding</keyword>
<keyword id="KW-0964">Secreted</keyword>
<keyword id="KW-0732">Signal</keyword>
<keyword id="KW-0926">Vacuole</keyword>
<keyword id="KW-0862">Zinc</keyword>
<sequence length="591" mass="67315">MRLFAHLAVLAILACAVPITAIPSFLSNSYPAHPAEGISLFPQTQPQAPLGLWTRLRNTVIERLWRVPPQLCKNRPGHKGKFPLFPAPASLRARYGDDVVLRFTIRNAEEVKALAEASNILFLDVWASTDEWVDIRLSKDVVPSLLGLLPKSLQTSHIPLIHDLPQTIYESYPSSSQRSSYDVQGFSPSTKHSSDKTNIFFQDYQPFSVIVPWMRLLTSMFSSRVQMINIGSTFEGRDIPALQIGVWPANNPKPRKTVVVSGGSHAREWISVSTVNYVAYSLITNYAKSKHVAELLQQFDFIFIPTLNPDGYIYTWEVDRIWRKNRQDTSLPFCPGVDLDRTWGFKWDGNITADNPCSESYPGEDPFAGIEAKQFSQWAKNQTAQNNTEFVAFIDLHSYSQQIRYPYSYSCQPDPPNLENLEELAIGIAKAIRLTNRETYEVSSACEGLMASQAKVKSDDPFPRIERTGGSALDWFYHDLNVKYSYQIKLRDRGSYGFLLPRENIVPTGQEMFNAVMVLGRFLSGHDGFGPLDWEDESQRPKAGEDDIPSDNELDENDDSWIPYDYRNHDDQNEGEGYDNDEWGFRRRRKR</sequence>
<gene>
    <name type="primary">ECM14</name>
    <name type="ORF">PABG_04690</name>
</gene>
<evidence type="ECO:0000250" key="1">
    <source>
        <dbReference type="UniProtKB" id="P00730"/>
    </source>
</evidence>
<evidence type="ECO:0000250" key="2">
    <source>
        <dbReference type="UniProtKB" id="P15085"/>
    </source>
</evidence>
<evidence type="ECO:0000250" key="3">
    <source>
        <dbReference type="UniProtKB" id="P38836"/>
    </source>
</evidence>
<evidence type="ECO:0000255" key="4"/>
<evidence type="ECO:0000255" key="5">
    <source>
        <dbReference type="PROSITE-ProRule" id="PRU01379"/>
    </source>
</evidence>
<evidence type="ECO:0000256" key="6">
    <source>
        <dbReference type="SAM" id="MobiDB-lite"/>
    </source>
</evidence>
<evidence type="ECO:0000305" key="7"/>
<comment type="function">
    <text evidence="3">Inactive carboxypeptidase that may play a role in cell wall organization and biogenesis.</text>
</comment>
<comment type="cofactor">
    <cofactor evidence="1">
        <name>Zn(2+)</name>
        <dbReference type="ChEBI" id="CHEBI:29105"/>
    </cofactor>
    <text evidence="1">Binds 1 zinc ion per subunit.</text>
</comment>
<comment type="subcellular location">
    <subcellularLocation>
        <location evidence="3">Vacuole</location>
    </subcellularLocation>
    <subcellularLocation>
        <location evidence="3">Secreted</location>
    </subcellularLocation>
</comment>
<comment type="similarity">
    <text evidence="7">Belongs to the peptidase M14 family.</text>
</comment>
<comment type="caution">
    <text evidence="3">Lacks the conserved Glu residue in position 489 essential for carbopeptidase activity. The mature form lacks catalytic activity towards synthetic peptide substrates.</text>
</comment>
<accession>C0SAI5</accession>
<feature type="signal peptide" evidence="4">
    <location>
        <begin position="1"/>
        <end position="21"/>
    </location>
</feature>
<feature type="propeptide" id="PRO_0000453248" evidence="3">
    <location>
        <begin position="22"/>
        <end position="175"/>
    </location>
</feature>
<feature type="chain" id="PRO_0000411188" description="Inactive metallocarboxypeptidase ECM14">
    <location>
        <begin position="176"/>
        <end position="591"/>
    </location>
</feature>
<feature type="domain" description="Peptidase M14" evidence="5">
    <location>
        <begin position="203"/>
        <end position="523"/>
    </location>
</feature>
<feature type="region of interest" description="Disordered" evidence="6">
    <location>
        <begin position="533"/>
        <end position="591"/>
    </location>
</feature>
<feature type="compositionally biased region" description="Acidic residues" evidence="6">
    <location>
        <begin position="546"/>
        <end position="559"/>
    </location>
</feature>
<feature type="compositionally biased region" description="Acidic residues" evidence="6">
    <location>
        <begin position="573"/>
        <end position="582"/>
    </location>
</feature>
<feature type="binding site" evidence="1">
    <location>
        <begin position="265"/>
        <end position="268"/>
    </location>
    <ligand>
        <name>substrate</name>
    </ligand>
</feature>
<feature type="binding site" evidence="5">
    <location>
        <position position="265"/>
    </location>
    <ligand>
        <name>Zn(2+)</name>
        <dbReference type="ChEBI" id="CHEBI:29105"/>
        <note>catalytic</note>
    </ligand>
</feature>
<feature type="binding site" evidence="5">
    <location>
        <position position="268"/>
    </location>
    <ligand>
        <name>Zn(2+)</name>
        <dbReference type="ChEBI" id="CHEBI:29105"/>
        <note>catalytic</note>
    </ligand>
</feature>
<feature type="binding site" evidence="1">
    <location>
        <position position="323"/>
    </location>
    <ligand>
        <name>substrate</name>
    </ligand>
</feature>
<feature type="binding site" evidence="1">
    <location>
        <begin position="340"/>
        <end position="341"/>
    </location>
    <ligand>
        <name>substrate</name>
    </ligand>
</feature>
<feature type="binding site" evidence="5">
    <location>
        <position position="397"/>
    </location>
    <ligand>
        <name>Zn(2+)</name>
        <dbReference type="ChEBI" id="CHEBI:29105"/>
        <note>catalytic</note>
    </ligand>
</feature>
<feature type="binding site" evidence="1">
    <location>
        <begin position="398"/>
        <end position="399"/>
    </location>
    <ligand>
        <name>substrate</name>
    </ligand>
</feature>
<feature type="glycosylation site" description="N-linked (GlcNAc...) asparagine" evidence="4">
    <location>
        <position position="350"/>
    </location>
</feature>
<feature type="glycosylation site" description="N-linked (GlcNAc...) asparagine" evidence="4">
    <location>
        <position position="381"/>
    </location>
</feature>
<feature type="glycosylation site" description="N-linked (GlcNAc...) asparagine" evidence="4">
    <location>
        <position position="386"/>
    </location>
</feature>
<feature type="disulfide bond" evidence="2">
    <location>
        <begin position="334"/>
        <end position="357"/>
    </location>
</feature>
<proteinExistence type="inferred from homology"/>